<feature type="chain" id="PRO_0000385004" description="Protein SEY1">
    <location>
        <begin position="1"/>
        <end position="780"/>
    </location>
</feature>
<feature type="topological domain" description="Cytoplasmic" evidence="1">
    <location>
        <begin position="1"/>
        <end position="680"/>
    </location>
</feature>
<feature type="transmembrane region" description="Helical" evidence="1">
    <location>
        <begin position="681"/>
        <end position="701"/>
    </location>
</feature>
<feature type="topological domain" description="Lumenal" evidence="1">
    <location>
        <begin position="702"/>
        <end position="704"/>
    </location>
</feature>
<feature type="transmembrane region" description="Helical" evidence="1">
    <location>
        <begin position="705"/>
        <end position="725"/>
    </location>
</feature>
<feature type="topological domain" description="Cytoplasmic" evidence="1">
    <location>
        <begin position="726"/>
        <end position="780"/>
    </location>
</feature>
<feature type="domain" description="GB1/RHD3-type G" evidence="2">
    <location>
        <begin position="35"/>
        <end position="265"/>
    </location>
</feature>
<feature type="region of interest" description="Disordered" evidence="3">
    <location>
        <begin position="756"/>
        <end position="780"/>
    </location>
</feature>
<feature type="coiled-coil region" evidence="1">
    <location>
        <begin position="440"/>
        <end position="463"/>
    </location>
</feature>
<feature type="binding site" evidence="1">
    <location>
        <begin position="45"/>
        <end position="52"/>
    </location>
    <ligand>
        <name>GTP</name>
        <dbReference type="ChEBI" id="CHEBI:37565"/>
    </ligand>
</feature>
<gene>
    <name evidence="1" type="primary">SEY1</name>
    <name type="ORF">Kpol_1037p42</name>
</gene>
<keyword id="KW-0175">Coiled coil</keyword>
<keyword id="KW-0256">Endoplasmic reticulum</keyword>
<keyword id="KW-0342">GTP-binding</keyword>
<keyword id="KW-0378">Hydrolase</keyword>
<keyword id="KW-0472">Membrane</keyword>
<keyword id="KW-0547">Nucleotide-binding</keyword>
<keyword id="KW-1185">Reference proteome</keyword>
<keyword id="KW-0812">Transmembrane</keyword>
<keyword id="KW-1133">Transmembrane helix</keyword>
<comment type="function">
    <text evidence="1">Cooperates with the reticulon proteins and tubule-shaping DP1 family proteins to generate and maintain the structure of the tubular endoplasmic reticulum network. Has GTPase activity, which is required for its function in ER organization.</text>
</comment>
<comment type="subcellular location">
    <subcellularLocation>
        <location evidence="1">Endoplasmic reticulum membrane</location>
        <topology evidence="1">Multi-pass membrane protein</topology>
    </subcellularLocation>
    <text evidence="1">Enriched in the cortical ER. Concentrated in punctae along the ER tubules.</text>
</comment>
<comment type="similarity">
    <text evidence="2">Belongs to the TRAFAC class dynamin-like GTPase superfamily. GB1/RHD3 GTPase family. RHD3 subfamily.</text>
</comment>
<evidence type="ECO:0000255" key="1">
    <source>
        <dbReference type="HAMAP-Rule" id="MF_03109"/>
    </source>
</evidence>
<evidence type="ECO:0000255" key="2">
    <source>
        <dbReference type="PROSITE-ProRule" id="PRU01052"/>
    </source>
</evidence>
<evidence type="ECO:0000256" key="3">
    <source>
        <dbReference type="SAM" id="MobiDB-lite"/>
    </source>
</evidence>
<protein>
    <recommendedName>
        <fullName evidence="1">Protein SEY1</fullName>
        <ecNumber evidence="1">3.6.5.-</ecNumber>
    </recommendedName>
</protein>
<dbReference type="EC" id="3.6.5.-" evidence="1"/>
<dbReference type="EMBL" id="DS480404">
    <property type="protein sequence ID" value="EDO17445.1"/>
    <property type="molecule type" value="Genomic_DNA"/>
</dbReference>
<dbReference type="RefSeq" id="XP_001645303.1">
    <property type="nucleotide sequence ID" value="XM_001645253.1"/>
</dbReference>
<dbReference type="SMR" id="A7TJY3"/>
<dbReference type="FunCoup" id="A7TJY3">
    <property type="interactions" value="67"/>
</dbReference>
<dbReference type="STRING" id="436907.A7TJY3"/>
<dbReference type="GeneID" id="5545665"/>
<dbReference type="KEGG" id="vpo:Kpol_1037p42"/>
<dbReference type="eggNOG" id="KOG2203">
    <property type="taxonomic scope" value="Eukaryota"/>
</dbReference>
<dbReference type="HOGENOM" id="CLU_011270_0_0_1"/>
<dbReference type="InParanoid" id="A7TJY3"/>
<dbReference type="OMA" id="PIIKMTE"/>
<dbReference type="OrthoDB" id="1597724at2759"/>
<dbReference type="PhylomeDB" id="A7TJY3"/>
<dbReference type="Proteomes" id="UP000000267">
    <property type="component" value="Unassembled WGS sequence"/>
</dbReference>
<dbReference type="GO" id="GO:0032541">
    <property type="term" value="C:cortical endoplasmic reticulum"/>
    <property type="evidence" value="ECO:0007669"/>
    <property type="project" value="EnsemblFungi"/>
</dbReference>
<dbReference type="GO" id="GO:0005789">
    <property type="term" value="C:endoplasmic reticulum membrane"/>
    <property type="evidence" value="ECO:0007669"/>
    <property type="project" value="UniProtKB-SubCell"/>
</dbReference>
<dbReference type="GO" id="GO:0005525">
    <property type="term" value="F:GTP binding"/>
    <property type="evidence" value="ECO:0007669"/>
    <property type="project" value="UniProtKB-UniRule"/>
</dbReference>
<dbReference type="GO" id="GO:0003924">
    <property type="term" value="F:GTPase activity"/>
    <property type="evidence" value="ECO:0007669"/>
    <property type="project" value="UniProtKB-UniRule"/>
</dbReference>
<dbReference type="GO" id="GO:0048309">
    <property type="term" value="P:endoplasmic reticulum inheritance"/>
    <property type="evidence" value="ECO:0007669"/>
    <property type="project" value="EnsemblFungi"/>
</dbReference>
<dbReference type="GO" id="GO:0016320">
    <property type="term" value="P:endoplasmic reticulum membrane fusion"/>
    <property type="evidence" value="ECO:0007669"/>
    <property type="project" value="EnsemblFungi"/>
</dbReference>
<dbReference type="CDD" id="cd01851">
    <property type="entry name" value="GBP"/>
    <property type="match status" value="1"/>
</dbReference>
<dbReference type="FunFam" id="3.40.50.300:FF:000727">
    <property type="entry name" value="Protein SEY1 homolog"/>
    <property type="match status" value="1"/>
</dbReference>
<dbReference type="Gene3D" id="3.40.50.300">
    <property type="entry name" value="P-loop containing nucleotide triphosphate hydrolases"/>
    <property type="match status" value="1"/>
</dbReference>
<dbReference type="HAMAP" id="MF_03109">
    <property type="entry name" value="Sey1"/>
    <property type="match status" value="1"/>
</dbReference>
<dbReference type="InterPro" id="IPR030386">
    <property type="entry name" value="G_GB1_RHD3_dom"/>
</dbReference>
<dbReference type="InterPro" id="IPR027417">
    <property type="entry name" value="P-loop_NTPase"/>
</dbReference>
<dbReference type="InterPro" id="IPR008803">
    <property type="entry name" value="RHD3/Sey1"/>
</dbReference>
<dbReference type="InterPro" id="IPR046758">
    <property type="entry name" value="Sey1/RHD3-like_3HB"/>
</dbReference>
<dbReference type="PANTHER" id="PTHR45923">
    <property type="entry name" value="PROTEIN SEY1"/>
    <property type="match status" value="1"/>
</dbReference>
<dbReference type="PANTHER" id="PTHR45923:SF2">
    <property type="entry name" value="PROTEIN SEY1"/>
    <property type="match status" value="1"/>
</dbReference>
<dbReference type="Pfam" id="PF05879">
    <property type="entry name" value="RHD3_GTPase"/>
    <property type="match status" value="1"/>
</dbReference>
<dbReference type="Pfam" id="PF20428">
    <property type="entry name" value="Sey1_3HB"/>
    <property type="match status" value="1"/>
</dbReference>
<dbReference type="SUPFAM" id="SSF52540">
    <property type="entry name" value="P-loop containing nucleoside triphosphate hydrolases"/>
    <property type="match status" value="1"/>
</dbReference>
<dbReference type="PROSITE" id="PS51715">
    <property type="entry name" value="G_GB1_RHD3"/>
    <property type="match status" value="1"/>
</dbReference>
<sequence length="780" mass="90129">MDSKEEAIQLITEEKHFSDDALAYFKTCIGGRDVGVNYHVISVFGSQSSGKSTLLNILFNTSFDTMDAQIKRQQTTKGIWVAHSNELLSNVDVNPEDKSDLFILDVEGSDGLERGEDQDFERKAALFAISVSEVLIVNMWEQQIGLYQGNNMALLKTVFEVNLSLFGKNKNGHKVLLLFVIRDHVGVTPISSLRDTITTELINLWETLSKPAECENKKLSDFFELQFVGLSHKLLQEERFVQDVKSLGDHFIMKDNEDYYFKPEYHHNLPLDGWTLYAKNCWELIEENRDLDLPTQQILVARFKTEEILNDSLEVLKSKYDSNVDPVIKDKLKLIQELSVLKTECLDMYDQHASKYVSAVYLEKRDELEAKIYLKFLETITLFIDSVSQDIFLQLVEDVNSESSKEPIFSKRLSNSTEVAKSKFEDIIEEFAAAKILSEEVKEEVVKRFENDLKETSDKLRVTALQKLITRSSKIINARIKDVVPQLLSNPDVDVWDRIMDKFHSIFSSTLIKYKLDDDTYDFQFGGEDEENNSTYKSIRVAAWKSLNDTIHDYLKEDTICNILRDRFELKFRYDDEDSPILWKNEEEVDLAFRVAKEYAFKIFDVLALIKTSDNVEVVPDINFHDSDEMYEDDLGIYHSAKFSHILNEVQKEKIQIQVRRQINVTVLDAKRSMIKTTTHIPLWIYAIIVVLGWNEFMMVIRNPLFVTLTILILVSFYFINKFDLWGPVKSVAQTAAGETIGTIKTKLRDFVLEEHEKTPKIQSEKSNSDSEKVVENEKS</sequence>
<name>SEY1_VANPO</name>
<proteinExistence type="inferred from homology"/>
<reference key="1">
    <citation type="journal article" date="2007" name="Proc. Natl. Acad. Sci. U.S.A.">
        <title>Independent sorting-out of thousands of duplicated gene pairs in two yeast species descended from a whole-genome duplication.</title>
        <authorList>
            <person name="Scannell D.R."/>
            <person name="Frank A.C."/>
            <person name="Conant G.C."/>
            <person name="Byrne K.P."/>
            <person name="Woolfit M."/>
            <person name="Wolfe K.H."/>
        </authorList>
    </citation>
    <scope>NUCLEOTIDE SEQUENCE [LARGE SCALE GENOMIC DNA]</scope>
    <source>
        <strain>ATCC 22028 / DSM 70294 / BCRC 21397 / CBS 2163 / NBRC 10782 / NRRL Y-8283 / UCD 57-17</strain>
    </source>
</reference>
<organism>
    <name type="scientific">Vanderwaltozyma polyspora (strain ATCC 22028 / DSM 70294 / BCRC 21397 / CBS 2163 / NBRC 10782 / NRRL Y-8283 / UCD 57-17)</name>
    <name type="common">Kluyveromyces polysporus</name>
    <dbReference type="NCBI Taxonomy" id="436907"/>
    <lineage>
        <taxon>Eukaryota</taxon>
        <taxon>Fungi</taxon>
        <taxon>Dikarya</taxon>
        <taxon>Ascomycota</taxon>
        <taxon>Saccharomycotina</taxon>
        <taxon>Saccharomycetes</taxon>
        <taxon>Saccharomycetales</taxon>
        <taxon>Saccharomycetaceae</taxon>
        <taxon>Vanderwaltozyma</taxon>
    </lineage>
</organism>
<accession>A7TJY3</accession>